<protein>
    <recommendedName>
        <fullName>3-methyl-2-oxobutanoate dehydrogenase subunit alpha</fullName>
        <ecNumber>1.2.4.4</ecNumber>
    </recommendedName>
    <alternativeName>
        <fullName>Branched-chain alpha-ketoacid dehydrogenase E1 component subunit alpha</fullName>
        <shortName>BCKADH E1-alpha</shortName>
    </alternativeName>
</protein>
<sequence>MGEGSRRPSGMLMSVDLEPVQLVGPDGTPTAERRYHRDLPEETLRWLYEMMVVTRELDTEFVNLQRQGELALYTPCRGQEAAQVGAAACLRKTDWLFPQYRELGVYLVRGIPPGHVGVAWRGTWHGGLQFTTKCCAPMSVPIGTQTLHAVGAAMAAQRLDEDSVTVAFLGDGATSEGDVHEALNFAAVFTTPCVFYVQNNQWAISMPVSRQTAAPSIAHKAIGYGMPGIRVDGNDVLACYAVMAEAAARARAGDGPTLIEAVTYRLGPHTTADDPTRYRSQEEVDRWATLDPIPRYRTYLQDQGLWSQRLEEQVTARAKHVRSELRDAVFDAPDFDVDEVFTTVYAEITPGLQAQREQLRAELARTD</sequence>
<dbReference type="EC" id="1.2.4.4"/>
<dbReference type="EMBL" id="AL123456">
    <property type="protein sequence ID" value="CCP45291.1"/>
    <property type="molecule type" value="Genomic_DNA"/>
</dbReference>
<dbReference type="PIR" id="A70550">
    <property type="entry name" value="A70550"/>
</dbReference>
<dbReference type="RefSeq" id="NP_217013.1">
    <property type="nucleotide sequence ID" value="NC_000962.3"/>
</dbReference>
<dbReference type="RefSeq" id="WP_003412761.1">
    <property type="nucleotide sequence ID" value="NZ_NVQJ01000063.1"/>
</dbReference>
<dbReference type="SMR" id="P9WIS3"/>
<dbReference type="FunCoup" id="P9WIS3">
    <property type="interactions" value="391"/>
</dbReference>
<dbReference type="STRING" id="83332.Rv2497c"/>
<dbReference type="PaxDb" id="83332-Rv2497c"/>
<dbReference type="DNASU" id="888583"/>
<dbReference type="GeneID" id="45426491"/>
<dbReference type="GeneID" id="888583"/>
<dbReference type="KEGG" id="mtu:Rv2497c"/>
<dbReference type="KEGG" id="mtv:RVBD_2497c"/>
<dbReference type="TubercuList" id="Rv2497c"/>
<dbReference type="eggNOG" id="COG1071">
    <property type="taxonomic scope" value="Bacteria"/>
</dbReference>
<dbReference type="InParanoid" id="P9WIS3"/>
<dbReference type="OrthoDB" id="9766715at2"/>
<dbReference type="PhylomeDB" id="P9WIS3"/>
<dbReference type="Proteomes" id="UP000001584">
    <property type="component" value="Chromosome"/>
</dbReference>
<dbReference type="GO" id="GO:0003863">
    <property type="term" value="F:3-methyl-2-oxobutanoate dehydrogenase (2-methylpropanoyl-transferring) activity"/>
    <property type="evidence" value="ECO:0007669"/>
    <property type="project" value="UniProtKB-EC"/>
</dbReference>
<dbReference type="GO" id="GO:0000287">
    <property type="term" value="F:magnesium ion binding"/>
    <property type="evidence" value="ECO:0007669"/>
    <property type="project" value="UniProtKB-ARBA"/>
</dbReference>
<dbReference type="GO" id="GO:0006086">
    <property type="term" value="P:pyruvate decarboxylation to acetyl-CoA"/>
    <property type="evidence" value="ECO:0000318"/>
    <property type="project" value="GO_Central"/>
</dbReference>
<dbReference type="CDD" id="cd02000">
    <property type="entry name" value="TPP_E1_PDC_ADC_BCADC"/>
    <property type="match status" value="1"/>
</dbReference>
<dbReference type="Gene3D" id="3.40.50.970">
    <property type="match status" value="1"/>
</dbReference>
<dbReference type="InterPro" id="IPR050771">
    <property type="entry name" value="Alpha-ketoacid_DH_E1_comp"/>
</dbReference>
<dbReference type="InterPro" id="IPR001017">
    <property type="entry name" value="DH_E1"/>
</dbReference>
<dbReference type="InterPro" id="IPR017596">
    <property type="entry name" value="PdhA/BkdA"/>
</dbReference>
<dbReference type="InterPro" id="IPR029061">
    <property type="entry name" value="THDP-binding"/>
</dbReference>
<dbReference type="NCBIfam" id="TIGR03181">
    <property type="entry name" value="PDH_E1_alph_x"/>
    <property type="match status" value="1"/>
</dbReference>
<dbReference type="PANTHER" id="PTHR43380">
    <property type="entry name" value="2-OXOISOVALERATE DEHYDROGENASE SUBUNIT ALPHA, MITOCHONDRIAL"/>
    <property type="match status" value="1"/>
</dbReference>
<dbReference type="PANTHER" id="PTHR43380:SF1">
    <property type="entry name" value="2-OXOISOVALERATE DEHYDROGENASE SUBUNIT ALPHA, MITOCHONDRIAL"/>
    <property type="match status" value="1"/>
</dbReference>
<dbReference type="Pfam" id="PF00676">
    <property type="entry name" value="E1_dh"/>
    <property type="match status" value="1"/>
</dbReference>
<dbReference type="SUPFAM" id="SSF52518">
    <property type="entry name" value="Thiamin diphosphate-binding fold (THDP-binding)"/>
    <property type="match status" value="1"/>
</dbReference>
<proteinExistence type="evidence at protein level"/>
<name>BKDA_MYCTU</name>
<reference key="1">
    <citation type="journal article" date="1998" name="Nature">
        <title>Deciphering the biology of Mycobacterium tuberculosis from the complete genome sequence.</title>
        <authorList>
            <person name="Cole S.T."/>
            <person name="Brosch R."/>
            <person name="Parkhill J."/>
            <person name="Garnier T."/>
            <person name="Churcher C.M."/>
            <person name="Harris D.E."/>
            <person name="Gordon S.V."/>
            <person name="Eiglmeier K."/>
            <person name="Gas S."/>
            <person name="Barry C.E. III"/>
            <person name="Tekaia F."/>
            <person name="Badcock K."/>
            <person name="Basham D."/>
            <person name="Brown D."/>
            <person name="Chillingworth T."/>
            <person name="Connor R."/>
            <person name="Davies R.M."/>
            <person name="Devlin K."/>
            <person name="Feltwell T."/>
            <person name="Gentles S."/>
            <person name="Hamlin N."/>
            <person name="Holroyd S."/>
            <person name="Hornsby T."/>
            <person name="Jagels K."/>
            <person name="Krogh A."/>
            <person name="McLean J."/>
            <person name="Moule S."/>
            <person name="Murphy L.D."/>
            <person name="Oliver S."/>
            <person name="Osborne J."/>
            <person name="Quail M.A."/>
            <person name="Rajandream M.A."/>
            <person name="Rogers J."/>
            <person name="Rutter S."/>
            <person name="Seeger K."/>
            <person name="Skelton S."/>
            <person name="Squares S."/>
            <person name="Squares R."/>
            <person name="Sulston J.E."/>
            <person name="Taylor K."/>
            <person name="Whitehead S."/>
            <person name="Barrell B.G."/>
        </authorList>
    </citation>
    <scope>NUCLEOTIDE SEQUENCE [LARGE SCALE GENOMIC DNA]</scope>
    <source>
        <strain>ATCC 25618 / H37Rv</strain>
    </source>
</reference>
<reference key="2">
    <citation type="journal article" date="2002" name="Mol. Microbiol.">
        <title>Evaluation of a nutrient starvation model of Mycobacterium tuberculosis persistence by gene and protein expression profiling.</title>
        <authorList>
            <person name="Betts J.C."/>
            <person name="Lukey P.T."/>
            <person name="Robb L.C."/>
            <person name="McAdam R.A."/>
            <person name="Duncan K."/>
        </authorList>
    </citation>
    <scope>INDUCTION BY STARVATION</scope>
    <source>
        <strain>ATCC 25618 / H37Rv</strain>
    </source>
</reference>
<reference key="3">
    <citation type="journal article" date="2005" name="Mol. Microbiol.">
        <title>Mycobacterium tuberculosis appears to lack alpha-ketoglutarate dehydrogenase and encodes pyruvate dehydrogenase in widely separated genes.</title>
        <authorList>
            <person name="Tian J."/>
            <person name="Bryk R."/>
            <person name="Shi S."/>
            <person name="Erdjument-Bromage H."/>
            <person name="Tempst P."/>
            <person name="Nathan C."/>
        </authorList>
    </citation>
    <scope>NO FUNCTION AS A PDH COMPONENT</scope>
    <scope>SUBUNIT</scope>
    <source>
        <strain>ATCC 25618 / H37Rv</strain>
    </source>
</reference>
<reference key="4">
    <citation type="journal article" date="2011" name="Cell Host Microbe">
        <title>Virulence of Mycobacterium tuberculosis depends on lipoamide dehydrogenase, a member of three multienzyme complexes.</title>
        <authorList>
            <person name="Venugopal A."/>
            <person name="Bryk R."/>
            <person name="Shi S."/>
            <person name="Rhee K."/>
            <person name="Rath P."/>
            <person name="Schnappinger D."/>
            <person name="Ehrt S."/>
            <person name="Nathan C."/>
        </authorList>
    </citation>
    <scope>FUNCTION AS A BCKADH COMPONENT</scope>
    <scope>INDUCTION</scope>
    <scope>GENE NAME</scope>
    <scope>IDENTIFICATION IN THE BCKADH COMPLEX</scope>
    <source>
        <strain>ATCC 25618 / H37Rv</strain>
    </source>
</reference>
<reference key="5">
    <citation type="journal article" date="2011" name="Mol. Cell. Proteomics">
        <title>Proteogenomic analysis of Mycobacterium tuberculosis by high resolution mass spectrometry.</title>
        <authorList>
            <person name="Kelkar D.S."/>
            <person name="Kumar D."/>
            <person name="Kumar P."/>
            <person name="Balakrishnan L."/>
            <person name="Muthusamy B."/>
            <person name="Yadav A.K."/>
            <person name="Shrivastava P."/>
            <person name="Marimuthu A."/>
            <person name="Anand S."/>
            <person name="Sundaram H."/>
            <person name="Kingsbury R."/>
            <person name="Harsha H.C."/>
            <person name="Nair B."/>
            <person name="Prasad T.S."/>
            <person name="Chauhan D.S."/>
            <person name="Katoch K."/>
            <person name="Katoch V.M."/>
            <person name="Kumar P."/>
            <person name="Chaerkady R."/>
            <person name="Ramachandran S."/>
            <person name="Dash D."/>
            <person name="Pandey A."/>
        </authorList>
    </citation>
    <scope>IDENTIFICATION BY MASS SPECTROMETRY [LARGE SCALE ANALYSIS]</scope>
    <source>
        <strain>ATCC 25618 / H37Rv</strain>
    </source>
</reference>
<gene>
    <name type="primary">bkdA</name>
    <name type="synonym">pdhA</name>
    <name type="ordered locus">Rv2497c</name>
</gene>
<organism>
    <name type="scientific">Mycobacterium tuberculosis (strain ATCC 25618 / H37Rv)</name>
    <dbReference type="NCBI Taxonomy" id="83332"/>
    <lineage>
        <taxon>Bacteria</taxon>
        <taxon>Bacillati</taxon>
        <taxon>Actinomycetota</taxon>
        <taxon>Actinomycetes</taxon>
        <taxon>Mycobacteriales</taxon>
        <taxon>Mycobacteriaceae</taxon>
        <taxon>Mycobacterium</taxon>
        <taxon>Mycobacterium tuberculosis complex</taxon>
    </lineage>
</organism>
<evidence type="ECO:0000250" key="1"/>
<evidence type="ECO:0000269" key="2">
    <source>
    </source>
</evidence>
<evidence type="ECO:0000269" key="3">
    <source>
    </source>
</evidence>
<evidence type="ECO:0000269" key="4">
    <source>
    </source>
</evidence>
<keyword id="KW-0460">Magnesium</keyword>
<keyword id="KW-0479">Metal-binding</keyword>
<keyword id="KW-0560">Oxidoreductase</keyword>
<keyword id="KW-1185">Reference proteome</keyword>
<keyword id="KW-0786">Thiamine pyrophosphate</keyword>
<comment type="function">
    <text evidence="4">Component of the branched-chain alpha-ketoacid dehydrogenase (BCKADH) complex, that catalyzes the overall conversion of branched-chain alpha-ketoacids to acyl-CoA and CO(2).</text>
</comment>
<comment type="catalytic activity">
    <reaction>
        <text>N(6)-[(R)-lipoyl]-L-lysyl-[protein] + 3-methyl-2-oxobutanoate + H(+) = N(6)-[(R)-S(8)-2-methylpropanoyldihydrolipoyl]-L-lysyl-[protein] + CO2</text>
        <dbReference type="Rhea" id="RHEA:13457"/>
        <dbReference type="Rhea" id="RHEA-COMP:10474"/>
        <dbReference type="Rhea" id="RHEA-COMP:10497"/>
        <dbReference type="ChEBI" id="CHEBI:11851"/>
        <dbReference type="ChEBI" id="CHEBI:15378"/>
        <dbReference type="ChEBI" id="CHEBI:16526"/>
        <dbReference type="ChEBI" id="CHEBI:83099"/>
        <dbReference type="ChEBI" id="CHEBI:83142"/>
        <dbReference type="EC" id="1.2.4.4"/>
    </reaction>
</comment>
<comment type="cofactor">
    <cofactor evidence="1">
        <name>Mg(2+)</name>
        <dbReference type="ChEBI" id="CHEBI:18420"/>
    </cofactor>
</comment>
<comment type="cofactor">
    <cofactor evidence="1">
        <name>thiamine diphosphate</name>
        <dbReference type="ChEBI" id="CHEBI:58937"/>
    </cofactor>
</comment>
<comment type="subunit">
    <text evidence="3 4">Heteromer of E1 alpha (BkdA) and beta (BkdB) subunits. Part of the BCKADH complex, consisting of multiple copies of BkdA/BkdB (E1), BkdC (E2) and Lpd (E3).</text>
</comment>
<comment type="induction">
    <text evidence="2 4">Up-regulated upon nutrient starvation. Is also highly up-regulated in a DlaT-deficient strain. Part of the bkdABC operon.</text>
</comment>
<feature type="chain" id="PRO_0000420518" description="3-methyl-2-oxobutanoate dehydrogenase subunit alpha">
    <location>
        <begin position="1"/>
        <end position="367"/>
    </location>
</feature>
<feature type="binding site" evidence="1">
    <location>
        <begin position="99"/>
        <end position="101"/>
    </location>
    <ligand>
        <name>thiamine diphosphate</name>
        <dbReference type="ChEBI" id="CHEBI:58937"/>
    </ligand>
</feature>
<feature type="binding site" evidence="1">
    <location>
        <position position="100"/>
    </location>
    <ligand>
        <name>substrate</name>
    </ligand>
</feature>
<feature type="binding site" evidence="1">
    <location>
        <begin position="141"/>
        <end position="142"/>
    </location>
    <ligand>
        <name>thiamine diphosphate</name>
        <dbReference type="ChEBI" id="CHEBI:58937"/>
    </ligand>
</feature>
<feature type="binding site" evidence="1">
    <location>
        <begin position="170"/>
        <end position="176"/>
    </location>
    <ligand>
        <name>thiamine diphosphate</name>
        <dbReference type="ChEBI" id="CHEBI:58937"/>
    </ligand>
</feature>
<feature type="binding site" evidence="1">
    <location>
        <position position="171"/>
    </location>
    <ligand>
        <name>Mg(2+)</name>
        <dbReference type="ChEBI" id="CHEBI:18420"/>
    </ligand>
</feature>
<feature type="binding site" evidence="1">
    <location>
        <begin position="200"/>
        <end position="204"/>
    </location>
    <ligand>
        <name>thiamine diphosphate</name>
        <dbReference type="ChEBI" id="CHEBI:58937"/>
    </ligand>
</feature>
<feature type="binding site" evidence="1">
    <location>
        <position position="200"/>
    </location>
    <ligand>
        <name>Mg(2+)</name>
        <dbReference type="ChEBI" id="CHEBI:18420"/>
    </ligand>
</feature>
<feature type="binding site" evidence="1">
    <location>
        <position position="269"/>
    </location>
    <ligand>
        <name>thiamine diphosphate</name>
        <dbReference type="ChEBI" id="CHEBI:58937"/>
    </ligand>
</feature>
<accession>P9WIS3</accession>
<accession>F2GH61</accession>
<accession>L0T9Z4</accession>
<accession>O06161</accession>
<accession>Q7D714</accession>